<dbReference type="EC" id="1.8.1.-"/>
<dbReference type="EMBL" id="AE014134">
    <property type="protein sequence ID" value="AAF53874.1"/>
    <property type="molecule type" value="Genomic_DNA"/>
</dbReference>
<dbReference type="EMBL" id="AE014134">
    <property type="protein sequence ID" value="AGB93154.1"/>
    <property type="molecule type" value="Genomic_DNA"/>
</dbReference>
<dbReference type="EMBL" id="BT022436">
    <property type="protein sequence ID" value="AAY54852.1"/>
    <property type="molecule type" value="mRNA"/>
</dbReference>
<dbReference type="RefSeq" id="NP_001260619.1">
    <property type="nucleotide sequence ID" value="NM_001273690.1"/>
</dbReference>
<dbReference type="RefSeq" id="NP_610023.1">
    <property type="nucleotide sequence ID" value="NM_136179.3"/>
</dbReference>
<dbReference type="SMR" id="Q9VIP2"/>
<dbReference type="FunCoup" id="Q9VIP2">
    <property type="interactions" value="697"/>
</dbReference>
<dbReference type="IntAct" id="Q9VIP2">
    <property type="interactions" value="3"/>
</dbReference>
<dbReference type="STRING" id="7227.FBpp0304005"/>
<dbReference type="PaxDb" id="7227-FBpp0304005"/>
<dbReference type="DNASU" id="35296"/>
<dbReference type="EnsemblMetazoa" id="FBtr0081333">
    <property type="protein sequence ID" value="FBpp0080865"/>
    <property type="gene ID" value="FBgn0032846"/>
</dbReference>
<dbReference type="EnsemblMetazoa" id="FBtr0331615">
    <property type="protein sequence ID" value="FBpp0304005"/>
    <property type="gene ID" value="FBgn0032846"/>
</dbReference>
<dbReference type="GeneID" id="35296"/>
<dbReference type="KEGG" id="dme:Dmel_CG10721"/>
<dbReference type="UCSC" id="CG10721-RA">
    <property type="organism name" value="d. melanogaster"/>
</dbReference>
<dbReference type="AGR" id="FB:FBgn0032846"/>
<dbReference type="CTD" id="79912"/>
<dbReference type="FlyBase" id="FBgn0032846">
    <property type="gene designation" value="Pyroxd1"/>
</dbReference>
<dbReference type="VEuPathDB" id="VectorBase:FBgn0032846"/>
<dbReference type="eggNOG" id="KOG2755">
    <property type="taxonomic scope" value="Eukaryota"/>
</dbReference>
<dbReference type="GeneTree" id="ENSGT00390000014894"/>
<dbReference type="HOGENOM" id="CLU_026335_0_0_1"/>
<dbReference type="InParanoid" id="Q9VIP2"/>
<dbReference type="OMA" id="MCENLIL"/>
<dbReference type="OrthoDB" id="202203at2759"/>
<dbReference type="PhylomeDB" id="Q9VIP2"/>
<dbReference type="BioGRID-ORCS" id="35296">
    <property type="hits" value="1 hit in 1 CRISPR screen"/>
</dbReference>
<dbReference type="GenomeRNAi" id="35296"/>
<dbReference type="PRO" id="PR:Q9VIP2"/>
<dbReference type="Proteomes" id="UP000000803">
    <property type="component" value="Chromosome 2L"/>
</dbReference>
<dbReference type="Bgee" id="FBgn0032846">
    <property type="expression patterns" value="Expressed in embryonic/larval hemocyte (Drosophila) and 58 other cell types or tissues"/>
</dbReference>
<dbReference type="GO" id="GO:0005737">
    <property type="term" value="C:cytoplasm"/>
    <property type="evidence" value="ECO:0000250"/>
    <property type="project" value="FlyBase"/>
</dbReference>
<dbReference type="GO" id="GO:0005634">
    <property type="term" value="C:nucleus"/>
    <property type="evidence" value="ECO:0000250"/>
    <property type="project" value="FlyBase"/>
</dbReference>
<dbReference type="GO" id="GO:0016174">
    <property type="term" value="F:NAD(P)H oxidase H2O2-forming activity"/>
    <property type="evidence" value="ECO:0000250"/>
    <property type="project" value="FlyBase"/>
</dbReference>
<dbReference type="Gene3D" id="3.30.390.30">
    <property type="match status" value="1"/>
</dbReference>
<dbReference type="Gene3D" id="3.50.50.60">
    <property type="entry name" value="FAD/NAD(P)-binding domain"/>
    <property type="match status" value="3"/>
</dbReference>
<dbReference type="InterPro" id="IPR050260">
    <property type="entry name" value="FAD-bd_OxRdtase"/>
</dbReference>
<dbReference type="InterPro" id="IPR036188">
    <property type="entry name" value="FAD/NAD-bd_sf"/>
</dbReference>
<dbReference type="InterPro" id="IPR023753">
    <property type="entry name" value="FAD/NAD-binding_dom"/>
</dbReference>
<dbReference type="InterPro" id="IPR016156">
    <property type="entry name" value="FAD/NAD-linked_Rdtase_dimer_sf"/>
</dbReference>
<dbReference type="InterPro" id="IPR041575">
    <property type="entry name" value="Rubredoxin_C"/>
</dbReference>
<dbReference type="PANTHER" id="PTHR43429">
    <property type="entry name" value="PYRIDINE NUCLEOTIDE-DISULFIDE OXIDOREDUCTASE DOMAIN-CONTAINING"/>
    <property type="match status" value="1"/>
</dbReference>
<dbReference type="PANTHER" id="PTHR43429:SF2">
    <property type="entry name" value="PYRIDINE NUCLEOTIDE-DISULFIDE OXIDOREDUCTASE DOMAIN-CONTAINING PROTEIN 1"/>
    <property type="match status" value="1"/>
</dbReference>
<dbReference type="Pfam" id="PF07992">
    <property type="entry name" value="Pyr_redox_2"/>
    <property type="match status" value="2"/>
</dbReference>
<dbReference type="Pfam" id="PF18267">
    <property type="entry name" value="Rubredoxin_C"/>
    <property type="match status" value="1"/>
</dbReference>
<dbReference type="PRINTS" id="PR00368">
    <property type="entry name" value="FADPNR"/>
</dbReference>
<dbReference type="SUPFAM" id="SSF51905">
    <property type="entry name" value="FAD/NAD(P)-binding domain"/>
    <property type="match status" value="1"/>
</dbReference>
<keyword id="KW-0274">FAD</keyword>
<keyword id="KW-0285">Flavoprotein</keyword>
<keyword id="KW-0560">Oxidoreductase</keyword>
<keyword id="KW-1185">Reference proteome</keyword>
<evidence type="ECO:0000250" key="1">
    <source>
        <dbReference type="UniProtKB" id="O52582"/>
    </source>
</evidence>
<evidence type="ECO:0000269" key="2">
    <source>
    </source>
</evidence>
<evidence type="ECO:0000303" key="3">
    <source>
    </source>
</evidence>
<evidence type="ECO:0000305" key="4"/>
<evidence type="ECO:0000312" key="5">
    <source>
        <dbReference type="EMBL" id="AAY54852.1"/>
    </source>
</evidence>
<evidence type="ECO:0000312" key="6">
    <source>
        <dbReference type="FlyBase" id="FBgn0032846"/>
    </source>
</evidence>
<evidence type="ECO:0000312" key="7">
    <source>
        <dbReference type="Proteomes" id="UP000000803"/>
    </source>
</evidence>
<reference evidence="7" key="1">
    <citation type="journal article" date="2000" name="Science">
        <title>The genome sequence of Drosophila melanogaster.</title>
        <authorList>
            <person name="Adams M.D."/>
            <person name="Celniker S.E."/>
            <person name="Holt R.A."/>
            <person name="Evans C.A."/>
            <person name="Gocayne J.D."/>
            <person name="Amanatides P.G."/>
            <person name="Scherer S.E."/>
            <person name="Li P.W."/>
            <person name="Hoskins R.A."/>
            <person name="Galle R.F."/>
            <person name="George R.A."/>
            <person name="Lewis S.E."/>
            <person name="Richards S."/>
            <person name="Ashburner M."/>
            <person name="Henderson S.N."/>
            <person name="Sutton G.G."/>
            <person name="Wortman J.R."/>
            <person name="Yandell M.D."/>
            <person name="Zhang Q."/>
            <person name="Chen L.X."/>
            <person name="Brandon R.C."/>
            <person name="Rogers Y.-H.C."/>
            <person name="Blazej R.G."/>
            <person name="Champe M."/>
            <person name="Pfeiffer B.D."/>
            <person name="Wan K.H."/>
            <person name="Doyle C."/>
            <person name="Baxter E.G."/>
            <person name="Helt G."/>
            <person name="Nelson C.R."/>
            <person name="Miklos G.L.G."/>
            <person name="Abril J.F."/>
            <person name="Agbayani A."/>
            <person name="An H.-J."/>
            <person name="Andrews-Pfannkoch C."/>
            <person name="Baldwin D."/>
            <person name="Ballew R.M."/>
            <person name="Basu A."/>
            <person name="Baxendale J."/>
            <person name="Bayraktaroglu L."/>
            <person name="Beasley E.M."/>
            <person name="Beeson K.Y."/>
            <person name="Benos P.V."/>
            <person name="Berman B.P."/>
            <person name="Bhandari D."/>
            <person name="Bolshakov S."/>
            <person name="Borkova D."/>
            <person name="Botchan M.R."/>
            <person name="Bouck J."/>
            <person name="Brokstein P."/>
            <person name="Brottier P."/>
            <person name="Burtis K.C."/>
            <person name="Busam D.A."/>
            <person name="Butler H."/>
            <person name="Cadieu E."/>
            <person name="Center A."/>
            <person name="Chandra I."/>
            <person name="Cherry J.M."/>
            <person name="Cawley S."/>
            <person name="Dahlke C."/>
            <person name="Davenport L.B."/>
            <person name="Davies P."/>
            <person name="de Pablos B."/>
            <person name="Delcher A."/>
            <person name="Deng Z."/>
            <person name="Mays A.D."/>
            <person name="Dew I."/>
            <person name="Dietz S.M."/>
            <person name="Dodson K."/>
            <person name="Doup L.E."/>
            <person name="Downes M."/>
            <person name="Dugan-Rocha S."/>
            <person name="Dunkov B.C."/>
            <person name="Dunn P."/>
            <person name="Durbin K.J."/>
            <person name="Evangelista C.C."/>
            <person name="Ferraz C."/>
            <person name="Ferriera S."/>
            <person name="Fleischmann W."/>
            <person name="Fosler C."/>
            <person name="Gabrielian A.E."/>
            <person name="Garg N.S."/>
            <person name="Gelbart W.M."/>
            <person name="Glasser K."/>
            <person name="Glodek A."/>
            <person name="Gong F."/>
            <person name="Gorrell J.H."/>
            <person name="Gu Z."/>
            <person name="Guan P."/>
            <person name="Harris M."/>
            <person name="Harris N.L."/>
            <person name="Harvey D.A."/>
            <person name="Heiman T.J."/>
            <person name="Hernandez J.R."/>
            <person name="Houck J."/>
            <person name="Hostin D."/>
            <person name="Houston K.A."/>
            <person name="Howland T.J."/>
            <person name="Wei M.-H."/>
            <person name="Ibegwam C."/>
            <person name="Jalali M."/>
            <person name="Kalush F."/>
            <person name="Karpen G.H."/>
            <person name="Ke Z."/>
            <person name="Kennison J.A."/>
            <person name="Ketchum K.A."/>
            <person name="Kimmel B.E."/>
            <person name="Kodira C.D."/>
            <person name="Kraft C.L."/>
            <person name="Kravitz S."/>
            <person name="Kulp D."/>
            <person name="Lai Z."/>
            <person name="Lasko P."/>
            <person name="Lei Y."/>
            <person name="Levitsky A.A."/>
            <person name="Li J.H."/>
            <person name="Li Z."/>
            <person name="Liang Y."/>
            <person name="Lin X."/>
            <person name="Liu X."/>
            <person name="Mattei B."/>
            <person name="McIntosh T.C."/>
            <person name="McLeod M.P."/>
            <person name="McPherson D."/>
            <person name="Merkulov G."/>
            <person name="Milshina N.V."/>
            <person name="Mobarry C."/>
            <person name="Morris J."/>
            <person name="Moshrefi A."/>
            <person name="Mount S.M."/>
            <person name="Moy M."/>
            <person name="Murphy B."/>
            <person name="Murphy L."/>
            <person name="Muzny D.M."/>
            <person name="Nelson D.L."/>
            <person name="Nelson D.R."/>
            <person name="Nelson K.A."/>
            <person name="Nixon K."/>
            <person name="Nusskern D.R."/>
            <person name="Pacleb J.M."/>
            <person name="Palazzolo M."/>
            <person name="Pittman G.S."/>
            <person name="Pan S."/>
            <person name="Pollard J."/>
            <person name="Puri V."/>
            <person name="Reese M.G."/>
            <person name="Reinert K."/>
            <person name="Remington K."/>
            <person name="Saunders R.D.C."/>
            <person name="Scheeler F."/>
            <person name="Shen H."/>
            <person name="Shue B.C."/>
            <person name="Siden-Kiamos I."/>
            <person name="Simpson M."/>
            <person name="Skupski M.P."/>
            <person name="Smith T.J."/>
            <person name="Spier E."/>
            <person name="Spradling A.C."/>
            <person name="Stapleton M."/>
            <person name="Strong R."/>
            <person name="Sun E."/>
            <person name="Svirskas R."/>
            <person name="Tector C."/>
            <person name="Turner R."/>
            <person name="Venter E."/>
            <person name="Wang A.H."/>
            <person name="Wang X."/>
            <person name="Wang Z.-Y."/>
            <person name="Wassarman D.A."/>
            <person name="Weinstock G.M."/>
            <person name="Weissenbach J."/>
            <person name="Williams S.M."/>
            <person name="Woodage T."/>
            <person name="Worley K.C."/>
            <person name="Wu D."/>
            <person name="Yang S."/>
            <person name="Yao Q.A."/>
            <person name="Ye J."/>
            <person name="Yeh R.-F."/>
            <person name="Zaveri J.S."/>
            <person name="Zhan M."/>
            <person name="Zhang G."/>
            <person name="Zhao Q."/>
            <person name="Zheng L."/>
            <person name="Zheng X.H."/>
            <person name="Zhong F.N."/>
            <person name="Zhong W."/>
            <person name="Zhou X."/>
            <person name="Zhu S.C."/>
            <person name="Zhu X."/>
            <person name="Smith H.O."/>
            <person name="Gibbs R.A."/>
            <person name="Myers E.W."/>
            <person name="Rubin G.M."/>
            <person name="Venter J.C."/>
        </authorList>
    </citation>
    <scope>NUCLEOTIDE SEQUENCE [LARGE SCALE GENOMIC DNA]</scope>
    <source>
        <strain evidence="7">Berkeley</strain>
    </source>
</reference>
<reference evidence="7" key="2">
    <citation type="journal article" date="2002" name="Genome Biol.">
        <title>Annotation of the Drosophila melanogaster euchromatic genome: a systematic review.</title>
        <authorList>
            <person name="Misra S."/>
            <person name="Crosby M.A."/>
            <person name="Mungall C.J."/>
            <person name="Matthews B.B."/>
            <person name="Campbell K.S."/>
            <person name="Hradecky P."/>
            <person name="Huang Y."/>
            <person name="Kaminker J.S."/>
            <person name="Millburn G.H."/>
            <person name="Prochnik S.E."/>
            <person name="Smith C.D."/>
            <person name="Tupy J.L."/>
            <person name="Whitfield E.J."/>
            <person name="Bayraktaroglu L."/>
            <person name="Berman B.P."/>
            <person name="Bettencourt B.R."/>
            <person name="Celniker S.E."/>
            <person name="de Grey A.D.N.J."/>
            <person name="Drysdale R.A."/>
            <person name="Harris N.L."/>
            <person name="Richter J."/>
            <person name="Russo S."/>
            <person name="Schroeder A.J."/>
            <person name="Shu S.Q."/>
            <person name="Stapleton M."/>
            <person name="Yamada C."/>
            <person name="Ashburner M."/>
            <person name="Gelbart W.M."/>
            <person name="Rubin G.M."/>
            <person name="Lewis S.E."/>
        </authorList>
    </citation>
    <scope>GENOME REANNOTATION</scope>
    <source>
        <strain evidence="7">Berkeley</strain>
    </source>
</reference>
<reference evidence="5" key="3">
    <citation type="submission" date="2005-05" db="EMBL/GenBank/DDBJ databases">
        <authorList>
            <person name="Stapleton M."/>
            <person name="Carlson J."/>
            <person name="Chavez C."/>
            <person name="Frise E."/>
            <person name="George R."/>
            <person name="Pacleb J."/>
            <person name="Park S."/>
            <person name="Wan K."/>
            <person name="Yu C."/>
            <person name="Celniker S."/>
        </authorList>
    </citation>
    <scope>NUCLEOTIDE SEQUENCE [LARGE SCALE MRNA]</scope>
    <source>
        <strain evidence="5">Berkeley</strain>
    </source>
</reference>
<reference evidence="4" key="4">
    <citation type="journal article" date="2018" name="Physiol. Genomics">
        <title>The impact of PYROXD1 deficiency on cellular respiration and correlations with genetic analyses of limb-girdle muscular dystrophy in Saudi Arabia and Sudan.</title>
        <authorList>
            <person name="Saha M."/>
            <person name="Reddy H.M."/>
            <person name="Salih M."/>
            <person name="Estrella E."/>
            <person name="Jones M.D."/>
            <person name="Mitsuhashi S."/>
            <person name="Cho K.A."/>
            <person name="Suzuki-Hatano S."/>
            <person name="Rizzo S.A."/>
            <person name="Hamad M.H."/>
            <person name="Mukhtar M.M."/>
            <person name="Hamed A.A."/>
            <person name="Elseed M.A."/>
            <person name="Lek M."/>
            <person name="Valkanas E."/>
            <person name="MacArthur D.G."/>
            <person name="Kunkel L.M."/>
            <person name="Pacak C.A."/>
            <person name="Draper I."/>
            <person name="Kang P.B."/>
        </authorList>
    </citation>
    <scope>DISRUPTION PHENOTYPE</scope>
</reference>
<comment type="function">
    <text evidence="4">Probable oxidoreductase.</text>
</comment>
<comment type="cofactor">
    <cofactor evidence="1">
        <name>FAD</name>
        <dbReference type="ChEBI" id="CHEBI:57692"/>
    </cofactor>
    <text evidence="1">Binds 1 FAD per subunit.</text>
</comment>
<comment type="disruption phenotype">
    <text evidence="2">RNAi-mediated knockdown results in failure to emerge from the pupal case and in lethality.</text>
</comment>
<comment type="similarity">
    <text evidence="4">Belongs to the class-I pyridine nucleotide-disulfide oxidoreductase family. PYROXD1 subfamily.</text>
</comment>
<protein>
    <recommendedName>
        <fullName evidence="3">Pyridine nucleotide-disulfide oxidoreductase domain-containing protein 1</fullName>
        <ecNumber>1.8.1.-</ecNumber>
    </recommendedName>
</protein>
<gene>
    <name evidence="6" type="primary">Pyroxd1</name>
    <name evidence="6" type="ORF">CG10721</name>
</gene>
<proteinExistence type="evidence at transcript level"/>
<name>PYRD1_DROME</name>
<accession>Q9VIP2</accession>
<organism evidence="7">
    <name type="scientific">Drosophila melanogaster</name>
    <name type="common">Fruit fly</name>
    <dbReference type="NCBI Taxonomy" id="7227"/>
    <lineage>
        <taxon>Eukaryota</taxon>
        <taxon>Metazoa</taxon>
        <taxon>Ecdysozoa</taxon>
        <taxon>Arthropoda</taxon>
        <taxon>Hexapoda</taxon>
        <taxon>Insecta</taxon>
        <taxon>Pterygota</taxon>
        <taxon>Neoptera</taxon>
        <taxon>Endopterygota</taxon>
        <taxon>Diptera</taxon>
        <taxon>Brachycera</taxon>
        <taxon>Muscomorpha</taxon>
        <taxon>Ephydroidea</taxon>
        <taxon>Drosophilidae</taxon>
        <taxon>Drosophila</taxon>
        <taxon>Sophophora</taxon>
    </lineage>
</organism>
<sequence>MSRKCEFLVVGGGIAGVSCAESLAIYRPNASILLLTESSIVKSVTNLVPVARYLHKFDVREQDVSEMGASFQTLVDRLDHINSREHCIRTKAGLEIKYRYLCLCTGGTPKLFSGKVVNPLVIGIRDTDSVQLLQRKLATAKDVLILGNGGIASELAYELKDVNVHWVVKDSHISATFVDPGAAEFFHIAMNECNAKDSSPVVAIKRMRYSEVLPKEQTNNHGAALGPDWHRSVDLSGAREGEENRLPKIYYKSRISSVQDLADDAGAIVKLEHEDGSFQQLTCDFIVSATGVWPNTDYTCDSPLQFSDDGGISVDEMMRTNLVDVFAAGDVCTANWPAAMHWFQMRLWTQARQMGSMAGRSMAAASEGESVYQDFCFELFGHVTKLFGYPVVLLGRFNGQDLGRDYEILVRCTRNKEYIKFVLQNGRLRGAMLIGNTDLAETCENLILNGIDLEPYGDDILNPDIDIEDYFD</sequence>
<feature type="chain" id="PRO_0000445780" description="Pyridine nucleotide-disulfide oxidoreductase domain-containing protein 1">
    <location>
        <begin position="1"/>
        <end position="472"/>
    </location>
</feature>